<organism>
    <name type="scientific">Chlamydia muridarum (strain MoPn / Nigg)</name>
    <dbReference type="NCBI Taxonomy" id="243161"/>
    <lineage>
        <taxon>Bacteria</taxon>
        <taxon>Pseudomonadati</taxon>
        <taxon>Chlamydiota</taxon>
        <taxon>Chlamydiia</taxon>
        <taxon>Chlamydiales</taxon>
        <taxon>Chlamydiaceae</taxon>
        <taxon>Chlamydia/Chlamydophila group</taxon>
        <taxon>Chlamydia</taxon>
    </lineage>
</organism>
<name>PMPH_CHLMU</name>
<sequence>MPFSLRSTSFCFLACLCSYSYGLASSPQVLTPNVIIPFKGDDIYLNGDCVFASIYAGAEQGSIISANGQNLTIVGQNHTLSFTDSQGPALQNCAFISAEEKISLRDFSSLLFSKNVSCGEKGMISGKTVSISGGDSIVFKDNSVGYSSLPSVGQTPTTPIVGDVLKGSIFCVETGLEISGVKKELVFDNTAGNFGAVFCSRAAQGDTTFTVKDCKGKILFQDNVGSCGGGVIYKGEVLFQDNEGEMLFRGNSAHDDLGILDANPQPPTEVGGGGGVICTPEKTVTFKGNKGPITFDYNFAKGRGGAIQSQTFSLVADSAVVFSNNTAEKGGGAIYALEVNVSTNGGSILFEGNRASEGGAICVSEPIAANNGGLTLHAADGDIIFSKNMTSDRPGERSAIRILDSGTNVSLNASGASKMIFYDPVVQNNPATPPTGTSGEIKINESGSGSVVFTAETLTPSEKLNVINATSNFPGNLTVSSGELVVTKGATLTVGNITATSGRVTLGSGASLSAVAGTAGTCTVSKLGIDLESFLVPTYETAKLGADTTVAVNNNPTLDLVMANETEMYDNPLFMNAVTIPFVTLVSLQTTGGVTTSAVTLNNADTAHYGYQGSWSADWRRPPLAPDPSGMTPLDKSNTLYVTWRPSSNYGVYKLDPQRRGELVPNSLWVSGSALRTFTNGLKEHYVSRDVGFIASVQALGDYVLNYKQGNRDGFLARYGGFQAVAASHYENGGIFGVAFGQLYGQTKSRLYDSKDAGNITILSCFGRSYIDVKGTETVVYWETAYGYSVHRMHTQYFNGKTNKFDHSKCRWHNNSYYAFVGAEHNFLEYCIPTRQLARDYDLTGFMRFEMSGGWSSGAKETGALPRHFDRGTGHNMSLPIGVVAHAVSNGRRSPPSKLTINMGYRPDIWRVTPHCNMKIIANGVKTPIQGSPLARHAFFLEVHDTLYVRHLGRAYMNYSLDARHRQTTHFVSLGLNRIF</sequence>
<accession>Q9PL44</accession>
<dbReference type="EMBL" id="AE002160">
    <property type="protein sequence ID" value="AAF39133.1"/>
    <property type="status" value="ALT_INIT"/>
    <property type="molecule type" value="Genomic_DNA"/>
</dbReference>
<dbReference type="PIR" id="A81723">
    <property type="entry name" value="A81723"/>
</dbReference>
<dbReference type="RefSeq" id="WP_010229979.1">
    <property type="nucleotide sequence ID" value="NZ_CP063055.1"/>
</dbReference>
<dbReference type="GeneID" id="1246434"/>
<dbReference type="KEGG" id="cmu:TC_0264"/>
<dbReference type="eggNOG" id="COG3210">
    <property type="taxonomic scope" value="Bacteria"/>
</dbReference>
<dbReference type="HOGENOM" id="CLU_004549_2_0_0"/>
<dbReference type="OrthoDB" id="18991at2"/>
<dbReference type="Proteomes" id="UP000000800">
    <property type="component" value="Chromosome"/>
</dbReference>
<dbReference type="GO" id="GO:0009279">
    <property type="term" value="C:cell outer membrane"/>
    <property type="evidence" value="ECO:0007669"/>
    <property type="project" value="UniProtKB-SubCell"/>
</dbReference>
<dbReference type="GO" id="GO:0005576">
    <property type="term" value="C:extracellular region"/>
    <property type="evidence" value="ECO:0007669"/>
    <property type="project" value="UniProtKB-KW"/>
</dbReference>
<dbReference type="Gene3D" id="2.40.128.130">
    <property type="entry name" value="Autotransporter beta-domain"/>
    <property type="match status" value="1"/>
</dbReference>
<dbReference type="InterPro" id="IPR005546">
    <property type="entry name" value="Autotransporte_beta"/>
</dbReference>
<dbReference type="InterPro" id="IPR036709">
    <property type="entry name" value="Autotransporte_beta_dom_sf"/>
</dbReference>
<dbReference type="InterPro" id="IPR011427">
    <property type="entry name" value="Polymorphic_membr_middle"/>
</dbReference>
<dbReference type="InterPro" id="IPR003368">
    <property type="entry name" value="POMP_repeat"/>
</dbReference>
<dbReference type="NCBIfam" id="TIGR01376">
    <property type="entry name" value="POMP_repeat"/>
    <property type="match status" value="3"/>
</dbReference>
<dbReference type="Pfam" id="PF03797">
    <property type="entry name" value="Autotransporter"/>
    <property type="match status" value="1"/>
</dbReference>
<dbReference type="Pfam" id="PF02415">
    <property type="entry name" value="Chlam_PMP"/>
    <property type="match status" value="3"/>
</dbReference>
<dbReference type="Pfam" id="PF07548">
    <property type="entry name" value="ChlamPMP_M"/>
    <property type="match status" value="1"/>
</dbReference>
<dbReference type="SMART" id="SM00869">
    <property type="entry name" value="Autotransporter"/>
    <property type="match status" value="1"/>
</dbReference>
<dbReference type="SUPFAM" id="SSF103515">
    <property type="entry name" value="Autotransporter"/>
    <property type="match status" value="1"/>
</dbReference>
<dbReference type="PROSITE" id="PS51208">
    <property type="entry name" value="AUTOTRANSPORTER"/>
    <property type="match status" value="1"/>
</dbReference>
<evidence type="ECO:0000255" key="1"/>
<evidence type="ECO:0000255" key="2">
    <source>
        <dbReference type="PROSITE-ProRule" id="PRU00556"/>
    </source>
</evidence>
<evidence type="ECO:0000305" key="3"/>
<reference key="1">
    <citation type="journal article" date="2000" name="Nucleic Acids Res.">
        <title>Genome sequences of Chlamydia trachomatis MoPn and Chlamydia pneumoniae AR39.</title>
        <authorList>
            <person name="Read T.D."/>
            <person name="Brunham R.C."/>
            <person name="Shen C."/>
            <person name="Gill S.R."/>
            <person name="Heidelberg J.F."/>
            <person name="White O."/>
            <person name="Hickey E.K."/>
            <person name="Peterson J.D."/>
            <person name="Utterback T.R."/>
            <person name="Berry K.J."/>
            <person name="Bass S."/>
            <person name="Linher K.D."/>
            <person name="Weidman J.F."/>
            <person name="Khouri H.M."/>
            <person name="Craven B."/>
            <person name="Bowman C."/>
            <person name="Dodson R.J."/>
            <person name="Gwinn M.L."/>
            <person name="Nelson W.C."/>
            <person name="DeBoy R.T."/>
            <person name="Kolonay J.F."/>
            <person name="McClarty G."/>
            <person name="Salzberg S.L."/>
            <person name="Eisen J.A."/>
            <person name="Fraser C.M."/>
        </authorList>
    </citation>
    <scope>NUCLEOTIDE SEQUENCE [LARGE SCALE GENOMIC DNA]</scope>
    <source>
        <strain>MoPn / Nigg</strain>
    </source>
</reference>
<comment type="subcellular location">
    <subcellularLocation>
        <location>Secreted</location>
        <location>Cell wall</location>
    </subcellularLocation>
    <subcellularLocation>
        <location evidence="3">Cell outer membrane</location>
        <topology evidence="3">Peripheral membrane protein</topology>
        <orientation evidence="3">Extracellular side</orientation>
    </subcellularLocation>
</comment>
<comment type="developmental stage">
    <text>Elementary body.</text>
</comment>
<comment type="similarity">
    <text evidence="3">Belongs to the PMP outer membrane protein family.</text>
</comment>
<comment type="sequence caution" evidence="3">
    <conflict type="erroneous initiation">
        <sequence resource="EMBL-CDS" id="AAF39133"/>
    </conflict>
</comment>
<protein>
    <recommendedName>
        <fullName>Probable outer membrane protein PmpH</fullName>
    </recommendedName>
    <alternativeName>
        <fullName>Polymorphic membrane protein H</fullName>
    </alternativeName>
</protein>
<feature type="signal peptide" evidence="1">
    <location>
        <begin position="1"/>
        <end position="24"/>
    </location>
</feature>
<feature type="chain" id="PRO_0000024730" description="Probable outer membrane protein PmpH">
    <location>
        <begin position="25"/>
        <end position="980"/>
    </location>
</feature>
<feature type="domain" description="Autotransporter" evidence="2">
    <location>
        <begin position="661"/>
        <end position="980"/>
    </location>
</feature>
<proteinExistence type="evidence at transcript level"/>
<gene>
    <name type="primary">pmpH</name>
    <name type="ordered locus">TC_0264</name>
</gene>
<keyword id="KW-0998">Cell outer membrane</keyword>
<keyword id="KW-0134">Cell wall</keyword>
<keyword id="KW-0472">Membrane</keyword>
<keyword id="KW-0964">Secreted</keyword>
<keyword id="KW-0732">Signal</keyword>
<keyword id="KW-0812">Transmembrane</keyword>
<keyword id="KW-1134">Transmembrane beta strand</keyword>